<name>ISPF_THIDA</name>
<keyword id="KW-0414">Isoprene biosynthesis</keyword>
<keyword id="KW-0456">Lyase</keyword>
<keyword id="KW-0479">Metal-binding</keyword>
<keyword id="KW-1185">Reference proteome</keyword>
<dbReference type="EC" id="4.6.1.12" evidence="1"/>
<dbReference type="EMBL" id="CP000116">
    <property type="protein sequence ID" value="AAZ96957.1"/>
    <property type="molecule type" value="Genomic_DNA"/>
</dbReference>
<dbReference type="RefSeq" id="WP_011311516.1">
    <property type="nucleotide sequence ID" value="NC_007404.1"/>
</dbReference>
<dbReference type="SMR" id="Q3SK37"/>
<dbReference type="STRING" id="292415.Tbd_1004"/>
<dbReference type="KEGG" id="tbd:Tbd_1004"/>
<dbReference type="eggNOG" id="COG0245">
    <property type="taxonomic scope" value="Bacteria"/>
</dbReference>
<dbReference type="HOGENOM" id="CLU_084630_2_0_4"/>
<dbReference type="OrthoDB" id="9804336at2"/>
<dbReference type="UniPathway" id="UPA00056">
    <property type="reaction ID" value="UER00095"/>
</dbReference>
<dbReference type="Proteomes" id="UP000008291">
    <property type="component" value="Chromosome"/>
</dbReference>
<dbReference type="GO" id="GO:0008685">
    <property type="term" value="F:2-C-methyl-D-erythritol 2,4-cyclodiphosphate synthase activity"/>
    <property type="evidence" value="ECO:0007669"/>
    <property type="project" value="UniProtKB-UniRule"/>
</dbReference>
<dbReference type="GO" id="GO:0046872">
    <property type="term" value="F:metal ion binding"/>
    <property type="evidence" value="ECO:0007669"/>
    <property type="project" value="UniProtKB-KW"/>
</dbReference>
<dbReference type="GO" id="GO:0019288">
    <property type="term" value="P:isopentenyl diphosphate biosynthetic process, methylerythritol 4-phosphate pathway"/>
    <property type="evidence" value="ECO:0007669"/>
    <property type="project" value="UniProtKB-UniRule"/>
</dbReference>
<dbReference type="GO" id="GO:0016114">
    <property type="term" value="P:terpenoid biosynthetic process"/>
    <property type="evidence" value="ECO:0007669"/>
    <property type="project" value="InterPro"/>
</dbReference>
<dbReference type="CDD" id="cd00554">
    <property type="entry name" value="MECDP_synthase"/>
    <property type="match status" value="1"/>
</dbReference>
<dbReference type="FunFam" id="3.30.1330.50:FF:000001">
    <property type="entry name" value="2-C-methyl-D-erythritol 2,4-cyclodiphosphate synthase"/>
    <property type="match status" value="1"/>
</dbReference>
<dbReference type="Gene3D" id="3.30.1330.50">
    <property type="entry name" value="2-C-methyl-D-erythritol 2,4-cyclodiphosphate synthase"/>
    <property type="match status" value="1"/>
</dbReference>
<dbReference type="HAMAP" id="MF_00107">
    <property type="entry name" value="IspF"/>
    <property type="match status" value="1"/>
</dbReference>
<dbReference type="InterPro" id="IPR003526">
    <property type="entry name" value="MECDP_synthase"/>
</dbReference>
<dbReference type="InterPro" id="IPR020555">
    <property type="entry name" value="MECDP_synthase_CS"/>
</dbReference>
<dbReference type="InterPro" id="IPR036571">
    <property type="entry name" value="MECDP_synthase_sf"/>
</dbReference>
<dbReference type="NCBIfam" id="TIGR00151">
    <property type="entry name" value="ispF"/>
    <property type="match status" value="1"/>
</dbReference>
<dbReference type="PANTHER" id="PTHR43181">
    <property type="entry name" value="2-C-METHYL-D-ERYTHRITOL 2,4-CYCLODIPHOSPHATE SYNTHASE, CHLOROPLASTIC"/>
    <property type="match status" value="1"/>
</dbReference>
<dbReference type="PANTHER" id="PTHR43181:SF1">
    <property type="entry name" value="2-C-METHYL-D-ERYTHRITOL 2,4-CYCLODIPHOSPHATE SYNTHASE, CHLOROPLASTIC"/>
    <property type="match status" value="1"/>
</dbReference>
<dbReference type="Pfam" id="PF02542">
    <property type="entry name" value="YgbB"/>
    <property type="match status" value="1"/>
</dbReference>
<dbReference type="SUPFAM" id="SSF69765">
    <property type="entry name" value="IpsF-like"/>
    <property type="match status" value="1"/>
</dbReference>
<dbReference type="PROSITE" id="PS01350">
    <property type="entry name" value="ISPF"/>
    <property type="match status" value="1"/>
</dbReference>
<protein>
    <recommendedName>
        <fullName evidence="1">2-C-methyl-D-erythritol 2,4-cyclodiphosphate synthase</fullName>
        <shortName evidence="1">MECDP-synthase</shortName>
        <shortName evidence="1">MECPP-synthase</shortName>
        <shortName evidence="1">MECPS</shortName>
        <ecNumber evidence="1">4.6.1.12</ecNumber>
    </recommendedName>
</protein>
<evidence type="ECO:0000255" key="1">
    <source>
        <dbReference type="HAMAP-Rule" id="MF_00107"/>
    </source>
</evidence>
<reference key="1">
    <citation type="journal article" date="2006" name="J. Bacteriol.">
        <title>The genome sequence of the obligately chemolithoautotrophic, facultatively anaerobic bacterium Thiobacillus denitrificans.</title>
        <authorList>
            <person name="Beller H.R."/>
            <person name="Chain P.S."/>
            <person name="Letain T.E."/>
            <person name="Chakicherla A."/>
            <person name="Larimer F.W."/>
            <person name="Richardson P.M."/>
            <person name="Coleman M.A."/>
            <person name="Wood A.P."/>
            <person name="Kelly D.P."/>
        </authorList>
    </citation>
    <scope>NUCLEOTIDE SEQUENCE [LARGE SCALE GENOMIC DNA]</scope>
    <source>
        <strain>ATCC 25259 / T1</strain>
    </source>
</reference>
<feature type="chain" id="PRO_0000237762" description="2-C-methyl-D-erythritol 2,4-cyclodiphosphate synthase">
    <location>
        <begin position="1"/>
        <end position="160"/>
    </location>
</feature>
<feature type="binding site" evidence="1">
    <location>
        <begin position="11"/>
        <end position="13"/>
    </location>
    <ligand>
        <name>4-CDP-2-C-methyl-D-erythritol 2-phosphate</name>
        <dbReference type="ChEBI" id="CHEBI:57919"/>
    </ligand>
</feature>
<feature type="binding site" evidence="1">
    <location>
        <position position="11"/>
    </location>
    <ligand>
        <name>a divalent metal cation</name>
        <dbReference type="ChEBI" id="CHEBI:60240"/>
    </ligand>
</feature>
<feature type="binding site" evidence="1">
    <location>
        <position position="13"/>
    </location>
    <ligand>
        <name>a divalent metal cation</name>
        <dbReference type="ChEBI" id="CHEBI:60240"/>
    </ligand>
</feature>
<feature type="binding site" evidence="1">
    <location>
        <begin position="37"/>
        <end position="38"/>
    </location>
    <ligand>
        <name>4-CDP-2-C-methyl-D-erythritol 2-phosphate</name>
        <dbReference type="ChEBI" id="CHEBI:57919"/>
    </ligand>
</feature>
<feature type="binding site" evidence="1">
    <location>
        <position position="45"/>
    </location>
    <ligand>
        <name>a divalent metal cation</name>
        <dbReference type="ChEBI" id="CHEBI:60240"/>
    </ligand>
</feature>
<feature type="binding site" evidence="1">
    <location>
        <begin position="59"/>
        <end position="61"/>
    </location>
    <ligand>
        <name>4-CDP-2-C-methyl-D-erythritol 2-phosphate</name>
        <dbReference type="ChEBI" id="CHEBI:57919"/>
    </ligand>
</feature>
<feature type="binding site" evidence="1">
    <location>
        <begin position="64"/>
        <end position="68"/>
    </location>
    <ligand>
        <name>4-CDP-2-C-methyl-D-erythritol 2-phosphate</name>
        <dbReference type="ChEBI" id="CHEBI:57919"/>
    </ligand>
</feature>
<feature type="binding site" evidence="1">
    <location>
        <begin position="103"/>
        <end position="109"/>
    </location>
    <ligand>
        <name>4-CDP-2-C-methyl-D-erythritol 2-phosphate</name>
        <dbReference type="ChEBI" id="CHEBI:57919"/>
    </ligand>
</feature>
<feature type="binding site" evidence="1">
    <location>
        <begin position="135"/>
        <end position="138"/>
    </location>
    <ligand>
        <name>4-CDP-2-C-methyl-D-erythritol 2-phosphate</name>
        <dbReference type="ChEBI" id="CHEBI:57919"/>
    </ligand>
</feature>
<feature type="binding site" evidence="1">
    <location>
        <position position="142"/>
    </location>
    <ligand>
        <name>4-CDP-2-C-methyl-D-erythritol 2-phosphate</name>
        <dbReference type="ChEBI" id="CHEBI:57919"/>
    </ligand>
</feature>
<feature type="binding site" evidence="1">
    <location>
        <position position="145"/>
    </location>
    <ligand>
        <name>4-CDP-2-C-methyl-D-erythritol 2-phosphate</name>
        <dbReference type="ChEBI" id="CHEBI:57919"/>
    </ligand>
</feature>
<feature type="site" description="Transition state stabilizer" evidence="1">
    <location>
        <position position="37"/>
    </location>
</feature>
<feature type="site" description="Transition state stabilizer" evidence="1">
    <location>
        <position position="136"/>
    </location>
</feature>
<proteinExistence type="inferred from homology"/>
<gene>
    <name evidence="1" type="primary">ispF</name>
    <name type="ordered locus">Tbd_1004</name>
</gene>
<sequence>MREMRVGHGYDVHVLVENRRLIIGGVEIPYERGLAGHSDADVLLHAICDALLGAVGLGDIGRHFPDTDAAFAGIDSRILLRRVAQQLKERAWQVGNVDATIIAQAPKMAPHIARMTAHIADDLGVAIDRVNVKATTTERLGFAGRGEGIAAEAVCLIERG</sequence>
<organism>
    <name type="scientific">Thiobacillus denitrificans (strain ATCC 25259 / T1)</name>
    <dbReference type="NCBI Taxonomy" id="292415"/>
    <lineage>
        <taxon>Bacteria</taxon>
        <taxon>Pseudomonadati</taxon>
        <taxon>Pseudomonadota</taxon>
        <taxon>Betaproteobacteria</taxon>
        <taxon>Nitrosomonadales</taxon>
        <taxon>Thiobacillaceae</taxon>
        <taxon>Thiobacillus</taxon>
    </lineage>
</organism>
<accession>Q3SK37</accession>
<comment type="function">
    <text evidence="1">Involved in the biosynthesis of isopentenyl diphosphate (IPP) and dimethylallyl diphosphate (DMAPP), two major building blocks of isoprenoid compounds. Catalyzes the conversion of 4-diphosphocytidyl-2-C-methyl-D-erythritol 2-phosphate (CDP-ME2P) to 2-C-methyl-D-erythritol 2,4-cyclodiphosphate (ME-CPP) with a corresponding release of cytidine 5-monophosphate (CMP).</text>
</comment>
<comment type="catalytic activity">
    <reaction evidence="1">
        <text>4-CDP-2-C-methyl-D-erythritol 2-phosphate = 2-C-methyl-D-erythritol 2,4-cyclic diphosphate + CMP</text>
        <dbReference type="Rhea" id="RHEA:23864"/>
        <dbReference type="ChEBI" id="CHEBI:57919"/>
        <dbReference type="ChEBI" id="CHEBI:58483"/>
        <dbReference type="ChEBI" id="CHEBI:60377"/>
        <dbReference type="EC" id="4.6.1.12"/>
    </reaction>
</comment>
<comment type="cofactor">
    <cofactor evidence="1">
        <name>a divalent metal cation</name>
        <dbReference type="ChEBI" id="CHEBI:60240"/>
    </cofactor>
    <text evidence="1">Binds 1 divalent metal cation per subunit.</text>
</comment>
<comment type="pathway">
    <text evidence="1">Isoprenoid biosynthesis; isopentenyl diphosphate biosynthesis via DXP pathway; isopentenyl diphosphate from 1-deoxy-D-xylulose 5-phosphate: step 4/6.</text>
</comment>
<comment type="subunit">
    <text evidence="1">Homotrimer.</text>
</comment>
<comment type="similarity">
    <text evidence="1">Belongs to the IspF family.</text>
</comment>